<keyword id="KW-1185">Reference proteome</keyword>
<keyword id="KW-0687">Ribonucleoprotein</keyword>
<keyword id="KW-0689">Ribosomal protein</keyword>
<keyword id="KW-0694">RNA-binding</keyword>
<keyword id="KW-0699">rRNA-binding</keyword>
<comment type="function">
    <text evidence="1">Binds the lower part of the 30S subunit head.</text>
</comment>
<comment type="subunit">
    <text evidence="1">Part of the 30S ribosomal subunit.</text>
</comment>
<comment type="similarity">
    <text evidence="1">Belongs to the universal ribosomal protein uS3 family.</text>
</comment>
<evidence type="ECO:0000255" key="1">
    <source>
        <dbReference type="HAMAP-Rule" id="MF_01309"/>
    </source>
</evidence>
<evidence type="ECO:0000256" key="2">
    <source>
        <dbReference type="SAM" id="MobiDB-lite"/>
    </source>
</evidence>
<evidence type="ECO:0000305" key="3"/>
<organism>
    <name type="scientific">Methanothermobacter thermautotrophicus (strain ATCC 29096 / DSM 1053 / JCM 10044 / NBRC 100330 / Delta H)</name>
    <name type="common">Methanobacterium thermoautotrophicum</name>
    <dbReference type="NCBI Taxonomy" id="187420"/>
    <lineage>
        <taxon>Archaea</taxon>
        <taxon>Methanobacteriati</taxon>
        <taxon>Methanobacteriota</taxon>
        <taxon>Methanomada group</taxon>
        <taxon>Methanobacteria</taxon>
        <taxon>Methanobacteriales</taxon>
        <taxon>Methanobacteriaceae</taxon>
        <taxon>Methanothermobacter</taxon>
    </lineage>
</organism>
<feature type="chain" id="PRO_0000130254" description="Small ribosomal subunit protein uS3">
    <location>
        <begin position="1"/>
        <end position="258"/>
    </location>
</feature>
<feature type="domain" description="KH type-2" evidence="1">
    <location>
        <begin position="16"/>
        <end position="85"/>
    </location>
</feature>
<feature type="region of interest" description="Disordered" evidence="2">
    <location>
        <begin position="198"/>
        <end position="258"/>
    </location>
</feature>
<feature type="compositionally biased region" description="Acidic residues" evidence="2">
    <location>
        <begin position="203"/>
        <end position="245"/>
    </location>
</feature>
<sequence length="258" mass="28850">MIEKDFVVEGLRRTRIDEYLEKELERAGYGGMDVQVTPMGTMVVVYAERPGMVIGRGGKTVRAITQKLKNKFDLENPQVEVKEVDVPELNPKIMAHKIAAMLQRGMHFRRVAYTTMRRIMAAGAQGVEVTISGKIRGARSATAKFTDGYIKKCGEPSVKHVREGFATVQLKPGVLGVYVRIMPPDVVLPDKVEIEDPRVTETPAEEASEASEVVEDLEEVEDLEEIEDLEEVEDLEEVEDLEDTEAEKKDADGEESEK</sequence>
<proteinExistence type="inferred from homology"/>
<protein>
    <recommendedName>
        <fullName evidence="1">Small ribosomal subunit protein uS3</fullName>
    </recommendedName>
    <alternativeName>
        <fullName evidence="3">30S ribosomal protein S3</fullName>
    </alternativeName>
</protein>
<reference key="1">
    <citation type="journal article" date="1997" name="J. Bacteriol.">
        <title>Complete genome sequence of Methanobacterium thermoautotrophicum deltaH: functional analysis and comparative genomics.</title>
        <authorList>
            <person name="Smith D.R."/>
            <person name="Doucette-Stamm L.A."/>
            <person name="Deloughery C."/>
            <person name="Lee H.-M."/>
            <person name="Dubois J."/>
            <person name="Aldredge T."/>
            <person name="Bashirzadeh R."/>
            <person name="Blakely D."/>
            <person name="Cook R."/>
            <person name="Gilbert K."/>
            <person name="Harrison D."/>
            <person name="Hoang L."/>
            <person name="Keagle P."/>
            <person name="Lumm W."/>
            <person name="Pothier B."/>
            <person name="Qiu D."/>
            <person name="Spadafora R."/>
            <person name="Vicare R."/>
            <person name="Wang Y."/>
            <person name="Wierzbowski J."/>
            <person name="Gibson R."/>
            <person name="Jiwani N."/>
            <person name="Caruso A."/>
            <person name="Bush D."/>
            <person name="Safer H."/>
            <person name="Patwell D."/>
            <person name="Prabhakar S."/>
            <person name="McDougall S."/>
            <person name="Shimer G."/>
            <person name="Goyal A."/>
            <person name="Pietrovski S."/>
            <person name="Church G.M."/>
            <person name="Daniels C.J."/>
            <person name="Mao J.-I."/>
            <person name="Rice P."/>
            <person name="Noelling J."/>
            <person name="Reeve J.N."/>
        </authorList>
    </citation>
    <scope>NUCLEOTIDE SEQUENCE [LARGE SCALE GENOMIC DNA]</scope>
    <source>
        <strain>ATCC 29096 / DSM 1053 / JCM 10044 / NBRC 100330 / Delta H</strain>
    </source>
</reference>
<gene>
    <name evidence="1" type="primary">rps3</name>
    <name type="ordered locus">MTH_8</name>
</gene>
<accession>O26116</accession>
<dbReference type="EMBL" id="AE000666">
    <property type="protein sequence ID" value="AAB84528.1"/>
    <property type="molecule type" value="Genomic_DNA"/>
</dbReference>
<dbReference type="PIR" id="F69206">
    <property type="entry name" value="F69206"/>
</dbReference>
<dbReference type="RefSeq" id="WP_010875650.1">
    <property type="nucleotide sequence ID" value="NC_000916.1"/>
</dbReference>
<dbReference type="SMR" id="O26116"/>
<dbReference type="FunCoup" id="O26116">
    <property type="interactions" value="169"/>
</dbReference>
<dbReference type="STRING" id="187420.MTH_8"/>
<dbReference type="PaxDb" id="187420-MTH_8"/>
<dbReference type="EnsemblBacteria" id="AAB84528">
    <property type="protein sequence ID" value="AAB84528"/>
    <property type="gene ID" value="MTH_8"/>
</dbReference>
<dbReference type="GeneID" id="1469970"/>
<dbReference type="KEGG" id="mth:MTH_8"/>
<dbReference type="PATRIC" id="fig|187420.15.peg.8"/>
<dbReference type="HOGENOM" id="CLU_058591_1_1_2"/>
<dbReference type="InParanoid" id="O26116"/>
<dbReference type="Proteomes" id="UP000005223">
    <property type="component" value="Chromosome"/>
</dbReference>
<dbReference type="GO" id="GO:0022627">
    <property type="term" value="C:cytosolic small ribosomal subunit"/>
    <property type="evidence" value="ECO:0007669"/>
    <property type="project" value="TreeGrafter"/>
</dbReference>
<dbReference type="GO" id="GO:0019843">
    <property type="term" value="F:rRNA binding"/>
    <property type="evidence" value="ECO:0007669"/>
    <property type="project" value="UniProtKB-UniRule"/>
</dbReference>
<dbReference type="GO" id="GO:0003735">
    <property type="term" value="F:structural constituent of ribosome"/>
    <property type="evidence" value="ECO:0007669"/>
    <property type="project" value="InterPro"/>
</dbReference>
<dbReference type="GO" id="GO:0006412">
    <property type="term" value="P:translation"/>
    <property type="evidence" value="ECO:0007669"/>
    <property type="project" value="UniProtKB-UniRule"/>
</dbReference>
<dbReference type="CDD" id="cd02411">
    <property type="entry name" value="KH-II_30S_S3_arch"/>
    <property type="match status" value="1"/>
</dbReference>
<dbReference type="FunFam" id="3.30.300.20:FF:000001">
    <property type="entry name" value="30S ribosomal protein S3"/>
    <property type="match status" value="1"/>
</dbReference>
<dbReference type="Gene3D" id="3.30.300.20">
    <property type="match status" value="1"/>
</dbReference>
<dbReference type="Gene3D" id="3.30.1140.32">
    <property type="entry name" value="Ribosomal protein S3, C-terminal domain"/>
    <property type="match status" value="1"/>
</dbReference>
<dbReference type="HAMAP" id="MF_01309_A">
    <property type="entry name" value="Ribosomal_uS3_A"/>
    <property type="match status" value="1"/>
</dbReference>
<dbReference type="InterPro" id="IPR004087">
    <property type="entry name" value="KH_dom"/>
</dbReference>
<dbReference type="InterPro" id="IPR015946">
    <property type="entry name" value="KH_dom-like_a/b"/>
</dbReference>
<dbReference type="InterPro" id="IPR004044">
    <property type="entry name" value="KH_dom_type_2"/>
</dbReference>
<dbReference type="InterPro" id="IPR009019">
    <property type="entry name" value="KH_sf_prok-type"/>
</dbReference>
<dbReference type="InterPro" id="IPR036419">
    <property type="entry name" value="Ribosomal_S3_C_sf"/>
</dbReference>
<dbReference type="InterPro" id="IPR027488">
    <property type="entry name" value="Ribosomal_uS3_arc"/>
</dbReference>
<dbReference type="InterPro" id="IPR001351">
    <property type="entry name" value="Ribosomal_uS3_C"/>
</dbReference>
<dbReference type="InterPro" id="IPR005703">
    <property type="entry name" value="Ribosomal_uS3_euk/arc"/>
</dbReference>
<dbReference type="NCBIfam" id="NF003219">
    <property type="entry name" value="PRK04191.1"/>
    <property type="match status" value="1"/>
</dbReference>
<dbReference type="NCBIfam" id="TIGR01008">
    <property type="entry name" value="uS3_euk_arch"/>
    <property type="match status" value="1"/>
</dbReference>
<dbReference type="PANTHER" id="PTHR11760">
    <property type="entry name" value="30S/40S RIBOSOMAL PROTEIN S3"/>
    <property type="match status" value="1"/>
</dbReference>
<dbReference type="PANTHER" id="PTHR11760:SF32">
    <property type="entry name" value="SMALL RIBOSOMAL SUBUNIT PROTEIN US3"/>
    <property type="match status" value="1"/>
</dbReference>
<dbReference type="Pfam" id="PF07650">
    <property type="entry name" value="KH_2"/>
    <property type="match status" value="1"/>
</dbReference>
<dbReference type="Pfam" id="PF00189">
    <property type="entry name" value="Ribosomal_S3_C"/>
    <property type="match status" value="1"/>
</dbReference>
<dbReference type="SMART" id="SM00322">
    <property type="entry name" value="KH"/>
    <property type="match status" value="1"/>
</dbReference>
<dbReference type="SUPFAM" id="SSF54814">
    <property type="entry name" value="Prokaryotic type KH domain (KH-domain type II)"/>
    <property type="match status" value="1"/>
</dbReference>
<dbReference type="SUPFAM" id="SSF54821">
    <property type="entry name" value="Ribosomal protein S3 C-terminal domain"/>
    <property type="match status" value="1"/>
</dbReference>
<dbReference type="PROSITE" id="PS50823">
    <property type="entry name" value="KH_TYPE_2"/>
    <property type="match status" value="1"/>
</dbReference>
<name>RS3_METTH</name>